<feature type="chain" id="PRO_1000094999" description="Deoxyuridine 5'-triphosphate nucleotidohydrolase">
    <location>
        <begin position="1"/>
        <end position="148"/>
    </location>
</feature>
<feature type="binding site" evidence="1">
    <location>
        <begin position="68"/>
        <end position="70"/>
    </location>
    <ligand>
        <name>substrate</name>
    </ligand>
</feature>
<feature type="binding site" evidence="1">
    <location>
        <position position="81"/>
    </location>
    <ligand>
        <name>substrate</name>
    </ligand>
</feature>
<feature type="binding site" evidence="1">
    <location>
        <begin position="85"/>
        <end position="87"/>
    </location>
    <ligand>
        <name>substrate</name>
    </ligand>
</feature>
<feature type="binding site" evidence="1">
    <location>
        <position position="95"/>
    </location>
    <ligand>
        <name>substrate</name>
    </ligand>
</feature>
<keyword id="KW-0378">Hydrolase</keyword>
<keyword id="KW-0460">Magnesium</keyword>
<keyword id="KW-0479">Metal-binding</keyword>
<keyword id="KW-0546">Nucleotide metabolism</keyword>
<proteinExistence type="inferred from homology"/>
<dbReference type="EC" id="3.6.1.23" evidence="1"/>
<dbReference type="EMBL" id="CP000923">
    <property type="protein sequence ID" value="ABY92922.1"/>
    <property type="molecule type" value="Genomic_DNA"/>
</dbReference>
<dbReference type="RefSeq" id="WP_003869126.1">
    <property type="nucleotide sequence ID" value="NC_010320.1"/>
</dbReference>
<dbReference type="SMR" id="B0K1C7"/>
<dbReference type="KEGG" id="tex:Teth514_1636"/>
<dbReference type="HOGENOM" id="CLU_068508_1_2_9"/>
<dbReference type="UniPathway" id="UPA00610">
    <property type="reaction ID" value="UER00666"/>
</dbReference>
<dbReference type="Proteomes" id="UP000002155">
    <property type="component" value="Chromosome"/>
</dbReference>
<dbReference type="GO" id="GO:0004170">
    <property type="term" value="F:dUTP diphosphatase activity"/>
    <property type="evidence" value="ECO:0007669"/>
    <property type="project" value="UniProtKB-UniRule"/>
</dbReference>
<dbReference type="GO" id="GO:0000287">
    <property type="term" value="F:magnesium ion binding"/>
    <property type="evidence" value="ECO:0007669"/>
    <property type="project" value="UniProtKB-UniRule"/>
</dbReference>
<dbReference type="GO" id="GO:0006226">
    <property type="term" value="P:dUMP biosynthetic process"/>
    <property type="evidence" value="ECO:0007669"/>
    <property type="project" value="UniProtKB-UniRule"/>
</dbReference>
<dbReference type="GO" id="GO:0046081">
    <property type="term" value="P:dUTP catabolic process"/>
    <property type="evidence" value="ECO:0007669"/>
    <property type="project" value="InterPro"/>
</dbReference>
<dbReference type="CDD" id="cd07557">
    <property type="entry name" value="trimeric_dUTPase"/>
    <property type="match status" value="1"/>
</dbReference>
<dbReference type="FunFam" id="2.70.40.10:FF:000002">
    <property type="entry name" value="dUTP diphosphatase"/>
    <property type="match status" value="1"/>
</dbReference>
<dbReference type="Gene3D" id="2.70.40.10">
    <property type="match status" value="1"/>
</dbReference>
<dbReference type="HAMAP" id="MF_00116">
    <property type="entry name" value="dUTPase_bact"/>
    <property type="match status" value="1"/>
</dbReference>
<dbReference type="InterPro" id="IPR008181">
    <property type="entry name" value="dUTPase"/>
</dbReference>
<dbReference type="InterPro" id="IPR029054">
    <property type="entry name" value="dUTPase-like"/>
</dbReference>
<dbReference type="InterPro" id="IPR036157">
    <property type="entry name" value="dUTPase-like_sf"/>
</dbReference>
<dbReference type="InterPro" id="IPR033704">
    <property type="entry name" value="dUTPase_trimeric"/>
</dbReference>
<dbReference type="NCBIfam" id="TIGR00576">
    <property type="entry name" value="dut"/>
    <property type="match status" value="1"/>
</dbReference>
<dbReference type="NCBIfam" id="NF001862">
    <property type="entry name" value="PRK00601.1"/>
    <property type="match status" value="1"/>
</dbReference>
<dbReference type="PANTHER" id="PTHR11241">
    <property type="entry name" value="DEOXYURIDINE 5'-TRIPHOSPHATE NUCLEOTIDOHYDROLASE"/>
    <property type="match status" value="1"/>
</dbReference>
<dbReference type="PANTHER" id="PTHR11241:SF0">
    <property type="entry name" value="DEOXYURIDINE 5'-TRIPHOSPHATE NUCLEOTIDOHYDROLASE"/>
    <property type="match status" value="1"/>
</dbReference>
<dbReference type="Pfam" id="PF00692">
    <property type="entry name" value="dUTPase"/>
    <property type="match status" value="1"/>
</dbReference>
<dbReference type="SUPFAM" id="SSF51283">
    <property type="entry name" value="dUTPase-like"/>
    <property type="match status" value="1"/>
</dbReference>
<evidence type="ECO:0000255" key="1">
    <source>
        <dbReference type="HAMAP-Rule" id="MF_00116"/>
    </source>
</evidence>
<sequence length="148" mass="16164">MSIILKIKKTDDAKDLPLPAYMSEGAAGMDLYANVKEEVILQPGEIKLIPTGIQIELPPNFEAQIRPRSGLALNYGITLLNTPGTIDSDYRGEIKLIVINLGKEAVKIARGQRIAQMVINQIVRPTIVEAEILSETKRDEGGFGHTGI</sequence>
<gene>
    <name evidence="1" type="primary">dut</name>
    <name type="ordered locus">Teth514_1636</name>
</gene>
<organism>
    <name type="scientific">Thermoanaerobacter sp. (strain X514)</name>
    <dbReference type="NCBI Taxonomy" id="399726"/>
    <lineage>
        <taxon>Bacteria</taxon>
        <taxon>Bacillati</taxon>
        <taxon>Bacillota</taxon>
        <taxon>Clostridia</taxon>
        <taxon>Thermoanaerobacterales</taxon>
        <taxon>Thermoanaerobacteraceae</taxon>
        <taxon>Thermoanaerobacter</taxon>
    </lineage>
</organism>
<protein>
    <recommendedName>
        <fullName evidence="1">Deoxyuridine 5'-triphosphate nucleotidohydrolase</fullName>
        <shortName evidence="1">dUTPase</shortName>
        <ecNumber evidence="1">3.6.1.23</ecNumber>
    </recommendedName>
    <alternativeName>
        <fullName evidence="1">dUTP pyrophosphatase</fullName>
    </alternativeName>
</protein>
<comment type="function">
    <text evidence="1">This enzyme is involved in nucleotide metabolism: it produces dUMP, the immediate precursor of thymidine nucleotides and it decreases the intracellular concentration of dUTP so that uracil cannot be incorporated into DNA.</text>
</comment>
<comment type="catalytic activity">
    <reaction evidence="1">
        <text>dUTP + H2O = dUMP + diphosphate + H(+)</text>
        <dbReference type="Rhea" id="RHEA:10248"/>
        <dbReference type="ChEBI" id="CHEBI:15377"/>
        <dbReference type="ChEBI" id="CHEBI:15378"/>
        <dbReference type="ChEBI" id="CHEBI:33019"/>
        <dbReference type="ChEBI" id="CHEBI:61555"/>
        <dbReference type="ChEBI" id="CHEBI:246422"/>
        <dbReference type="EC" id="3.6.1.23"/>
    </reaction>
</comment>
<comment type="cofactor">
    <cofactor evidence="1">
        <name>Mg(2+)</name>
        <dbReference type="ChEBI" id="CHEBI:18420"/>
    </cofactor>
</comment>
<comment type="pathway">
    <text evidence="1">Pyrimidine metabolism; dUMP biosynthesis; dUMP from dCTP (dUTP route): step 2/2.</text>
</comment>
<comment type="similarity">
    <text evidence="1">Belongs to the dUTPase family.</text>
</comment>
<name>DUT_THEPX</name>
<accession>B0K1C7</accession>
<reference key="1">
    <citation type="submission" date="2008-01" db="EMBL/GenBank/DDBJ databases">
        <title>Complete sequence of Thermoanaerobacter sp. X514.</title>
        <authorList>
            <consortium name="US DOE Joint Genome Institute"/>
            <person name="Copeland A."/>
            <person name="Lucas S."/>
            <person name="Lapidus A."/>
            <person name="Barry K."/>
            <person name="Glavina del Rio T."/>
            <person name="Dalin E."/>
            <person name="Tice H."/>
            <person name="Pitluck S."/>
            <person name="Bruce D."/>
            <person name="Goodwin L."/>
            <person name="Saunders E."/>
            <person name="Brettin T."/>
            <person name="Detter J.C."/>
            <person name="Han C."/>
            <person name="Schmutz J."/>
            <person name="Larimer F."/>
            <person name="Land M."/>
            <person name="Hauser L."/>
            <person name="Kyrpides N."/>
            <person name="Kim E."/>
            <person name="Hemme C."/>
            <person name="Fields M.W."/>
            <person name="He Z."/>
            <person name="Zhou J."/>
            <person name="Richardson P."/>
        </authorList>
    </citation>
    <scope>NUCLEOTIDE SEQUENCE [LARGE SCALE GENOMIC DNA]</scope>
    <source>
        <strain>X514</strain>
    </source>
</reference>